<comment type="catalytic activity">
    <reaction evidence="1">
        <text>urea + 2 H2O + H(+) = hydrogencarbonate + 2 NH4(+)</text>
        <dbReference type="Rhea" id="RHEA:20557"/>
        <dbReference type="ChEBI" id="CHEBI:15377"/>
        <dbReference type="ChEBI" id="CHEBI:15378"/>
        <dbReference type="ChEBI" id="CHEBI:16199"/>
        <dbReference type="ChEBI" id="CHEBI:17544"/>
        <dbReference type="ChEBI" id="CHEBI:28938"/>
        <dbReference type="EC" id="3.5.1.5"/>
    </reaction>
</comment>
<comment type="pathway">
    <text evidence="1">Nitrogen metabolism; urea degradation; CO(2) and NH(3) from urea (urease route): step 1/1.</text>
</comment>
<comment type="subunit">
    <text evidence="1">Heterotrimer of UreA (gamma), UreB (beta) and UreC (alpha) subunits. Three heterotrimers associate to form the active enzyme.</text>
</comment>
<comment type="subcellular location">
    <subcellularLocation>
        <location evidence="1">Cytoplasm</location>
    </subcellularLocation>
</comment>
<comment type="similarity">
    <text evidence="1">Belongs to the urease beta subunit family.</text>
</comment>
<reference key="1">
    <citation type="journal article" date="2001" name="Proc. Natl. Acad. Sci. U.S.A.">
        <title>Genome sequence of an industrial microorganism Streptomyces avermitilis: deducing the ability of producing secondary metabolites.</title>
        <authorList>
            <person name="Omura S."/>
            <person name="Ikeda H."/>
            <person name="Ishikawa J."/>
            <person name="Hanamoto A."/>
            <person name="Takahashi C."/>
            <person name="Shinose M."/>
            <person name="Takahashi Y."/>
            <person name="Horikawa H."/>
            <person name="Nakazawa H."/>
            <person name="Osonoe T."/>
            <person name="Kikuchi H."/>
            <person name="Shiba T."/>
            <person name="Sakaki Y."/>
            <person name="Hattori M."/>
        </authorList>
    </citation>
    <scope>NUCLEOTIDE SEQUENCE [LARGE SCALE GENOMIC DNA]</scope>
    <source>
        <strain>ATCC 31267 / DSM 46492 / JCM 5070 / NBRC 14893 / NCIMB 12804 / NRRL 8165 / MA-4680</strain>
    </source>
</reference>
<reference key="2">
    <citation type="journal article" date="2003" name="Nat. Biotechnol.">
        <title>Complete genome sequence and comparative analysis of the industrial microorganism Streptomyces avermitilis.</title>
        <authorList>
            <person name="Ikeda H."/>
            <person name="Ishikawa J."/>
            <person name="Hanamoto A."/>
            <person name="Shinose M."/>
            <person name="Kikuchi H."/>
            <person name="Shiba T."/>
            <person name="Sakaki Y."/>
            <person name="Hattori M."/>
            <person name="Omura S."/>
        </authorList>
    </citation>
    <scope>NUCLEOTIDE SEQUENCE [LARGE SCALE GENOMIC DNA]</scope>
    <source>
        <strain>ATCC 31267 / DSM 46492 / JCM 5070 / NBRC 14893 / NCIMB 12804 / NRRL 8165 / MA-4680</strain>
    </source>
</reference>
<name>URE2_STRAW</name>
<evidence type="ECO:0000255" key="1">
    <source>
        <dbReference type="HAMAP-Rule" id="MF_01954"/>
    </source>
</evidence>
<keyword id="KW-0963">Cytoplasm</keyword>
<keyword id="KW-0378">Hydrolase</keyword>
<keyword id="KW-1185">Reference proteome</keyword>
<proteinExistence type="inferred from homology"/>
<protein>
    <recommendedName>
        <fullName evidence="1">Urease subunit beta</fullName>
        <ecNumber evidence="1">3.5.1.5</ecNumber>
    </recommendedName>
    <alternativeName>
        <fullName evidence="1">Urea amidohydrolase subunit beta</fullName>
    </alternativeName>
</protein>
<organism>
    <name type="scientific">Streptomyces avermitilis (strain ATCC 31267 / DSM 46492 / JCM 5070 / NBRC 14893 / NCIMB 12804 / NRRL 8165 / MA-4680)</name>
    <dbReference type="NCBI Taxonomy" id="227882"/>
    <lineage>
        <taxon>Bacteria</taxon>
        <taxon>Bacillati</taxon>
        <taxon>Actinomycetota</taxon>
        <taxon>Actinomycetes</taxon>
        <taxon>Kitasatosporales</taxon>
        <taxon>Streptomycetaceae</taxon>
        <taxon>Streptomyces</taxon>
    </lineage>
</organism>
<dbReference type="EC" id="3.5.1.5" evidence="1"/>
<dbReference type="EMBL" id="BA000030">
    <property type="protein sequence ID" value="BAC74816.1"/>
    <property type="molecule type" value="Genomic_DNA"/>
</dbReference>
<dbReference type="RefSeq" id="WP_010988500.1">
    <property type="nucleotide sequence ID" value="NZ_JZJK01000085.1"/>
</dbReference>
<dbReference type="SMR" id="Q826S0"/>
<dbReference type="GeneID" id="41544178"/>
<dbReference type="KEGG" id="sma:SAVERM_7105"/>
<dbReference type="eggNOG" id="COG0832">
    <property type="taxonomic scope" value="Bacteria"/>
</dbReference>
<dbReference type="HOGENOM" id="CLU_129707_1_0_11"/>
<dbReference type="OrthoDB" id="9797217at2"/>
<dbReference type="UniPathway" id="UPA00258">
    <property type="reaction ID" value="UER00370"/>
</dbReference>
<dbReference type="Proteomes" id="UP000000428">
    <property type="component" value="Chromosome"/>
</dbReference>
<dbReference type="GO" id="GO:0035550">
    <property type="term" value="C:urease complex"/>
    <property type="evidence" value="ECO:0007669"/>
    <property type="project" value="InterPro"/>
</dbReference>
<dbReference type="GO" id="GO:0009039">
    <property type="term" value="F:urease activity"/>
    <property type="evidence" value="ECO:0007669"/>
    <property type="project" value="UniProtKB-UniRule"/>
</dbReference>
<dbReference type="GO" id="GO:0043419">
    <property type="term" value="P:urea catabolic process"/>
    <property type="evidence" value="ECO:0007669"/>
    <property type="project" value="UniProtKB-UniRule"/>
</dbReference>
<dbReference type="CDD" id="cd00407">
    <property type="entry name" value="Urease_beta"/>
    <property type="match status" value="1"/>
</dbReference>
<dbReference type="Gene3D" id="2.10.150.10">
    <property type="entry name" value="Urease, beta subunit"/>
    <property type="match status" value="1"/>
</dbReference>
<dbReference type="HAMAP" id="MF_01954">
    <property type="entry name" value="Urease_beta"/>
    <property type="match status" value="1"/>
</dbReference>
<dbReference type="InterPro" id="IPR002019">
    <property type="entry name" value="Urease_beta-like"/>
</dbReference>
<dbReference type="InterPro" id="IPR036461">
    <property type="entry name" value="Urease_betasu_sf"/>
</dbReference>
<dbReference type="InterPro" id="IPR050069">
    <property type="entry name" value="Urease_subunit"/>
</dbReference>
<dbReference type="NCBIfam" id="NF009682">
    <property type="entry name" value="PRK13203.1"/>
    <property type="match status" value="1"/>
</dbReference>
<dbReference type="NCBIfam" id="TIGR00192">
    <property type="entry name" value="urease_beta"/>
    <property type="match status" value="1"/>
</dbReference>
<dbReference type="PANTHER" id="PTHR33569">
    <property type="entry name" value="UREASE"/>
    <property type="match status" value="1"/>
</dbReference>
<dbReference type="PANTHER" id="PTHR33569:SF1">
    <property type="entry name" value="UREASE"/>
    <property type="match status" value="1"/>
</dbReference>
<dbReference type="Pfam" id="PF00699">
    <property type="entry name" value="Urease_beta"/>
    <property type="match status" value="1"/>
</dbReference>
<dbReference type="SUPFAM" id="SSF51278">
    <property type="entry name" value="Urease, beta-subunit"/>
    <property type="match status" value="1"/>
</dbReference>
<sequence length="103" mass="10746">MIPGEILFADGPVAYNEGREVTRLTVLNAADRPVQVGSHYHFAEANPGLDFDRAAARGKRLNVAAGTAVRFEPGIPVDVELVPLAGARVVPGLRGETGGALDA</sequence>
<gene>
    <name evidence="1" type="primary">ureB</name>
    <name type="ordered locus">SAV_7105</name>
</gene>
<accession>Q826S0</accession>
<feature type="chain" id="PRO_0000234277" description="Urease subunit beta">
    <location>
        <begin position="1"/>
        <end position="103"/>
    </location>
</feature>